<evidence type="ECO:0000255" key="1">
    <source>
        <dbReference type="HAMAP-Rule" id="MF_01147"/>
    </source>
</evidence>
<sequence length="279" mass="31572">MGIVFNYIDPVAFNLGPLSVRWYGIIIAVGILLGYFVAQRALVKAGLHKDTLVDIIFYSALFGFIAARIYFVIFQWPYYAENPSEIIKIWHGGIAIHGGLIGGFIAGVIVCKVKNLNPFQIGDIVAPSIILAQGIGRWGNFMNHEAHGGSVSRAFLEQLHLPNFIIENMYINGQYYHPTFLYESIWDVAGFIILVNIRKHLKLGETFFLYLTWYSIGRFFIEGLRTDSLMLTSNIRVAQLVSILLILISISLIVYRRIKYNPPLYSKVGALPWPTKKVK</sequence>
<reference key="1">
    <citation type="journal article" date="2007" name="BMC Microbiol.">
        <title>Subtle genetic changes enhance virulence of methicillin resistant and sensitive Staphylococcus aureus.</title>
        <authorList>
            <person name="Highlander S.K."/>
            <person name="Hulten K.G."/>
            <person name="Qin X."/>
            <person name="Jiang H."/>
            <person name="Yerrapragada S."/>
            <person name="Mason E.O. Jr."/>
            <person name="Shang Y."/>
            <person name="Williams T.M."/>
            <person name="Fortunov R.M."/>
            <person name="Liu Y."/>
            <person name="Igboeli O."/>
            <person name="Petrosino J."/>
            <person name="Tirumalai M."/>
            <person name="Uzman A."/>
            <person name="Fox G.E."/>
            <person name="Cardenas A.M."/>
            <person name="Muzny D.M."/>
            <person name="Hemphill L."/>
            <person name="Ding Y."/>
            <person name="Dugan S."/>
            <person name="Blyth P.R."/>
            <person name="Buhay C.J."/>
            <person name="Dinh H.H."/>
            <person name="Hawes A.C."/>
            <person name="Holder M."/>
            <person name="Kovar C.L."/>
            <person name="Lee S.L."/>
            <person name="Liu W."/>
            <person name="Nazareth L.V."/>
            <person name="Wang Q."/>
            <person name="Zhou J."/>
            <person name="Kaplan S.L."/>
            <person name="Weinstock G.M."/>
        </authorList>
    </citation>
    <scope>NUCLEOTIDE SEQUENCE [LARGE SCALE GENOMIC DNA]</scope>
    <source>
        <strain>USA300 / TCH1516</strain>
    </source>
</reference>
<dbReference type="EC" id="2.5.1.145" evidence="1"/>
<dbReference type="EMBL" id="CP000730">
    <property type="protein sequence ID" value="ABX28810.1"/>
    <property type="molecule type" value="Genomic_DNA"/>
</dbReference>
<dbReference type="RefSeq" id="WP_000513308.1">
    <property type="nucleotide sequence ID" value="NC_010079.1"/>
</dbReference>
<dbReference type="SMR" id="A8Z037"/>
<dbReference type="KEGG" id="sax:USA300HOU_0789"/>
<dbReference type="HOGENOM" id="CLU_013386_0_1_9"/>
<dbReference type="UniPathway" id="UPA00664"/>
<dbReference type="GO" id="GO:0005886">
    <property type="term" value="C:plasma membrane"/>
    <property type="evidence" value="ECO:0007669"/>
    <property type="project" value="UniProtKB-SubCell"/>
</dbReference>
<dbReference type="GO" id="GO:0008961">
    <property type="term" value="F:phosphatidylglycerol-prolipoprotein diacylglyceryl transferase activity"/>
    <property type="evidence" value="ECO:0007669"/>
    <property type="project" value="UniProtKB-UniRule"/>
</dbReference>
<dbReference type="GO" id="GO:0042158">
    <property type="term" value="P:lipoprotein biosynthetic process"/>
    <property type="evidence" value="ECO:0007669"/>
    <property type="project" value="UniProtKB-UniRule"/>
</dbReference>
<dbReference type="HAMAP" id="MF_01147">
    <property type="entry name" value="Lgt"/>
    <property type="match status" value="1"/>
</dbReference>
<dbReference type="InterPro" id="IPR001640">
    <property type="entry name" value="Lgt"/>
</dbReference>
<dbReference type="NCBIfam" id="TIGR00544">
    <property type="entry name" value="lgt"/>
    <property type="match status" value="1"/>
</dbReference>
<dbReference type="PANTHER" id="PTHR30589:SF0">
    <property type="entry name" value="PHOSPHATIDYLGLYCEROL--PROLIPOPROTEIN DIACYLGLYCERYL TRANSFERASE"/>
    <property type="match status" value="1"/>
</dbReference>
<dbReference type="PANTHER" id="PTHR30589">
    <property type="entry name" value="PROLIPOPROTEIN DIACYLGLYCERYL TRANSFERASE"/>
    <property type="match status" value="1"/>
</dbReference>
<dbReference type="Pfam" id="PF01790">
    <property type="entry name" value="LGT"/>
    <property type="match status" value="1"/>
</dbReference>
<dbReference type="PROSITE" id="PS01311">
    <property type="entry name" value="LGT"/>
    <property type="match status" value="1"/>
</dbReference>
<accession>A8Z037</accession>
<protein>
    <recommendedName>
        <fullName evidence="1">Phosphatidylglycerol--prolipoprotein diacylglyceryl transferase</fullName>
        <ecNumber evidence="1">2.5.1.145</ecNumber>
    </recommendedName>
</protein>
<feature type="chain" id="PRO_1000085087" description="Phosphatidylglycerol--prolipoprotein diacylglyceryl transferase">
    <location>
        <begin position="1"/>
        <end position="279"/>
    </location>
</feature>
<feature type="transmembrane region" description="Helical" evidence="1">
    <location>
        <begin position="18"/>
        <end position="38"/>
    </location>
</feature>
<feature type="transmembrane region" description="Helical" evidence="1">
    <location>
        <begin position="55"/>
        <end position="75"/>
    </location>
</feature>
<feature type="transmembrane region" description="Helical" evidence="1">
    <location>
        <begin position="89"/>
        <end position="109"/>
    </location>
</feature>
<feature type="transmembrane region" description="Helical" evidence="1">
    <location>
        <begin position="203"/>
        <end position="223"/>
    </location>
</feature>
<feature type="transmembrane region" description="Helical" evidence="1">
    <location>
        <begin position="235"/>
        <end position="255"/>
    </location>
</feature>
<feature type="binding site" evidence="1">
    <location>
        <position position="137"/>
    </location>
    <ligand>
        <name>a 1,2-diacyl-sn-glycero-3-phospho-(1'-sn-glycerol)</name>
        <dbReference type="ChEBI" id="CHEBI:64716"/>
    </ligand>
</feature>
<organism>
    <name type="scientific">Staphylococcus aureus (strain USA300 / TCH1516)</name>
    <dbReference type="NCBI Taxonomy" id="451516"/>
    <lineage>
        <taxon>Bacteria</taxon>
        <taxon>Bacillati</taxon>
        <taxon>Bacillota</taxon>
        <taxon>Bacilli</taxon>
        <taxon>Bacillales</taxon>
        <taxon>Staphylococcaceae</taxon>
        <taxon>Staphylococcus</taxon>
    </lineage>
</organism>
<name>LGT_STAAT</name>
<gene>
    <name evidence="1" type="primary">lgt</name>
    <name type="ordered locus">USA300HOU_0789</name>
</gene>
<comment type="function">
    <text evidence="1">Catalyzes the transfer of the diacylglyceryl group from phosphatidylglycerol to the sulfhydryl group of the N-terminal cysteine of a prolipoprotein, the first step in the formation of mature lipoproteins.</text>
</comment>
<comment type="catalytic activity">
    <reaction evidence="1">
        <text>L-cysteinyl-[prolipoprotein] + a 1,2-diacyl-sn-glycero-3-phospho-(1'-sn-glycerol) = an S-1,2-diacyl-sn-glyceryl-L-cysteinyl-[prolipoprotein] + sn-glycerol 1-phosphate + H(+)</text>
        <dbReference type="Rhea" id="RHEA:56712"/>
        <dbReference type="Rhea" id="RHEA-COMP:14679"/>
        <dbReference type="Rhea" id="RHEA-COMP:14680"/>
        <dbReference type="ChEBI" id="CHEBI:15378"/>
        <dbReference type="ChEBI" id="CHEBI:29950"/>
        <dbReference type="ChEBI" id="CHEBI:57685"/>
        <dbReference type="ChEBI" id="CHEBI:64716"/>
        <dbReference type="ChEBI" id="CHEBI:140658"/>
        <dbReference type="EC" id="2.5.1.145"/>
    </reaction>
</comment>
<comment type="pathway">
    <text evidence="1">Protein modification; lipoprotein biosynthesis (diacylglyceryl transfer).</text>
</comment>
<comment type="subcellular location">
    <subcellularLocation>
        <location evidence="1">Cell membrane</location>
        <topology evidence="1">Multi-pass membrane protein</topology>
    </subcellularLocation>
</comment>
<comment type="similarity">
    <text evidence="1">Belongs to the Lgt family.</text>
</comment>
<keyword id="KW-1003">Cell membrane</keyword>
<keyword id="KW-0472">Membrane</keyword>
<keyword id="KW-0808">Transferase</keyword>
<keyword id="KW-0812">Transmembrane</keyword>
<keyword id="KW-1133">Transmembrane helix</keyword>
<proteinExistence type="inferred from homology"/>